<protein>
    <recommendedName>
        <fullName evidence="1">Queuine tRNA-ribosyltransferase</fullName>
        <ecNumber evidence="1">2.4.2.29</ecNumber>
    </recommendedName>
    <alternativeName>
        <fullName evidence="1">Guanine insertion enzyme</fullName>
    </alternativeName>
    <alternativeName>
        <fullName evidence="1">tRNA-guanine transglycosylase</fullName>
    </alternativeName>
</protein>
<keyword id="KW-0328">Glycosyltransferase</keyword>
<keyword id="KW-0479">Metal-binding</keyword>
<keyword id="KW-0671">Queuosine biosynthesis</keyword>
<keyword id="KW-1185">Reference proteome</keyword>
<keyword id="KW-0808">Transferase</keyword>
<keyword id="KW-0819">tRNA processing</keyword>
<keyword id="KW-0862">Zinc</keyword>
<dbReference type="EC" id="2.4.2.29" evidence="1"/>
<dbReference type="EMBL" id="L42023">
    <property type="protein sequence ID" value="AAC21911.1"/>
    <property type="molecule type" value="Genomic_DNA"/>
</dbReference>
<dbReference type="PIR" id="A64057">
    <property type="entry name" value="A64057"/>
</dbReference>
<dbReference type="RefSeq" id="NP_438414.1">
    <property type="nucleotide sequence ID" value="NC_000907.1"/>
</dbReference>
<dbReference type="SMR" id="P44594"/>
<dbReference type="STRING" id="71421.HI_0244"/>
<dbReference type="EnsemblBacteria" id="AAC21911">
    <property type="protein sequence ID" value="AAC21911"/>
    <property type="gene ID" value="HI_0244"/>
</dbReference>
<dbReference type="KEGG" id="hin:HI_0244"/>
<dbReference type="PATRIC" id="fig|71421.8.peg.259"/>
<dbReference type="eggNOG" id="COG0343">
    <property type="taxonomic scope" value="Bacteria"/>
</dbReference>
<dbReference type="HOGENOM" id="CLU_022060_0_1_6"/>
<dbReference type="OrthoDB" id="9805417at2"/>
<dbReference type="PhylomeDB" id="P44594"/>
<dbReference type="BioCyc" id="HINF71421:G1GJ1-259-MONOMER"/>
<dbReference type="UniPathway" id="UPA00392"/>
<dbReference type="Proteomes" id="UP000000579">
    <property type="component" value="Chromosome"/>
</dbReference>
<dbReference type="GO" id="GO:0005737">
    <property type="term" value="C:cytoplasm"/>
    <property type="evidence" value="ECO:0000318"/>
    <property type="project" value="GO_Central"/>
</dbReference>
<dbReference type="GO" id="GO:0005829">
    <property type="term" value="C:cytosol"/>
    <property type="evidence" value="ECO:0000318"/>
    <property type="project" value="GO_Central"/>
</dbReference>
<dbReference type="GO" id="GO:0046872">
    <property type="term" value="F:metal ion binding"/>
    <property type="evidence" value="ECO:0007669"/>
    <property type="project" value="UniProtKB-KW"/>
</dbReference>
<dbReference type="GO" id="GO:0008479">
    <property type="term" value="F:tRNA-guanosine(34) queuine transglycosylase activity"/>
    <property type="evidence" value="ECO:0007669"/>
    <property type="project" value="UniProtKB-UniRule"/>
</dbReference>
<dbReference type="GO" id="GO:0008616">
    <property type="term" value="P:queuosine biosynthetic process"/>
    <property type="evidence" value="ECO:0000318"/>
    <property type="project" value="GO_Central"/>
</dbReference>
<dbReference type="GO" id="GO:0002099">
    <property type="term" value="P:tRNA wobble guanine modification"/>
    <property type="evidence" value="ECO:0000318"/>
    <property type="project" value="GO_Central"/>
</dbReference>
<dbReference type="GO" id="GO:0101030">
    <property type="term" value="P:tRNA-guanine transglycosylation"/>
    <property type="evidence" value="ECO:0007669"/>
    <property type="project" value="InterPro"/>
</dbReference>
<dbReference type="FunFam" id="3.20.20.105:FF:000001">
    <property type="entry name" value="Queuine tRNA-ribosyltransferase"/>
    <property type="match status" value="1"/>
</dbReference>
<dbReference type="Gene3D" id="3.20.20.105">
    <property type="entry name" value="Queuine tRNA-ribosyltransferase-like"/>
    <property type="match status" value="1"/>
</dbReference>
<dbReference type="HAMAP" id="MF_00168">
    <property type="entry name" value="Q_tRNA_Tgt"/>
    <property type="match status" value="1"/>
</dbReference>
<dbReference type="InterPro" id="IPR050076">
    <property type="entry name" value="ArchSynthase1/Queuine_TRR"/>
</dbReference>
<dbReference type="InterPro" id="IPR004803">
    <property type="entry name" value="TGT"/>
</dbReference>
<dbReference type="InterPro" id="IPR036511">
    <property type="entry name" value="TGT-like_sf"/>
</dbReference>
<dbReference type="InterPro" id="IPR002616">
    <property type="entry name" value="tRNA_ribo_trans-like"/>
</dbReference>
<dbReference type="NCBIfam" id="TIGR00430">
    <property type="entry name" value="Q_tRNA_tgt"/>
    <property type="match status" value="1"/>
</dbReference>
<dbReference type="NCBIfam" id="TIGR00449">
    <property type="entry name" value="tgt_general"/>
    <property type="match status" value="1"/>
</dbReference>
<dbReference type="PANTHER" id="PTHR46499">
    <property type="entry name" value="QUEUINE TRNA-RIBOSYLTRANSFERASE"/>
    <property type="match status" value="1"/>
</dbReference>
<dbReference type="PANTHER" id="PTHR46499:SF1">
    <property type="entry name" value="QUEUINE TRNA-RIBOSYLTRANSFERASE"/>
    <property type="match status" value="1"/>
</dbReference>
<dbReference type="Pfam" id="PF01702">
    <property type="entry name" value="TGT"/>
    <property type="match status" value="1"/>
</dbReference>
<dbReference type="SUPFAM" id="SSF51713">
    <property type="entry name" value="tRNA-guanine transglycosylase"/>
    <property type="match status" value="1"/>
</dbReference>
<evidence type="ECO:0000255" key="1">
    <source>
        <dbReference type="HAMAP-Rule" id="MF_00168"/>
    </source>
</evidence>
<accession>P44594</accession>
<gene>
    <name evidence="1" type="primary">tgt</name>
    <name type="ordered locus">HI_0244</name>
</gene>
<proteinExistence type="inferred from homology"/>
<sequence length="382" mass="43627">MKYELDKTSGNARRGRLVFERPQGTFSVETPAFMPVGTYGTVKGMTPEEVRATGAEILLGNTFHLWLRPGQEVMRKHGDLHDFMQWHRPILTDSGGFQVFSLGKLRKITEEGVKFQNPINGERIFLSPEKSMEIQYDLGSDIVMIFDECTPYPATFDYAKKSMEMSLRWAKRSRDRFDELGNKNALFGIIQGGVFEELRKVSLEGLVNIGFDGYAVGGLAVGEPKEDMHRILEYICPQIPADKPRYLMGVGKPEDLVEGVRRGIDMFDCVMPTRNARNGHLFVTDGIVKIRNAKYRDDTSPLDPECDCYTCKNYTKAYLYHLDKCGEILGARLNTIHNLRYYQRLMAEIRQAIEDDRFDDFVVEFYARMGKPVPPLQLADKS</sequence>
<reference key="1">
    <citation type="journal article" date="1995" name="Science">
        <title>Whole-genome random sequencing and assembly of Haemophilus influenzae Rd.</title>
        <authorList>
            <person name="Fleischmann R.D."/>
            <person name="Adams M.D."/>
            <person name="White O."/>
            <person name="Clayton R.A."/>
            <person name="Kirkness E.F."/>
            <person name="Kerlavage A.R."/>
            <person name="Bult C.J."/>
            <person name="Tomb J.-F."/>
            <person name="Dougherty B.A."/>
            <person name="Merrick J.M."/>
            <person name="McKenney K."/>
            <person name="Sutton G.G."/>
            <person name="FitzHugh W."/>
            <person name="Fields C.A."/>
            <person name="Gocayne J.D."/>
            <person name="Scott J.D."/>
            <person name="Shirley R."/>
            <person name="Liu L.-I."/>
            <person name="Glodek A."/>
            <person name="Kelley J.M."/>
            <person name="Weidman J.F."/>
            <person name="Phillips C.A."/>
            <person name="Spriggs T."/>
            <person name="Hedblom E."/>
            <person name="Cotton M.D."/>
            <person name="Utterback T.R."/>
            <person name="Hanna M.C."/>
            <person name="Nguyen D.T."/>
            <person name="Saudek D.M."/>
            <person name="Brandon R.C."/>
            <person name="Fine L.D."/>
            <person name="Fritchman J.L."/>
            <person name="Fuhrmann J.L."/>
            <person name="Geoghagen N.S.M."/>
            <person name="Gnehm C.L."/>
            <person name="McDonald L.A."/>
            <person name="Small K.V."/>
            <person name="Fraser C.M."/>
            <person name="Smith H.O."/>
            <person name="Venter J.C."/>
        </authorList>
    </citation>
    <scope>NUCLEOTIDE SEQUENCE [LARGE SCALE GENOMIC DNA]</scope>
    <source>
        <strain>ATCC 51907 / DSM 11121 / KW20 / Rd</strain>
    </source>
</reference>
<comment type="function">
    <text evidence="1">Catalyzes the base-exchange of a guanine (G) residue with the queuine precursor 7-aminomethyl-7-deazaguanine (PreQ1) at position 34 (anticodon wobble position) in tRNAs with GU(N) anticodons (tRNA-Asp, -Asn, -His and -Tyr). Catalysis occurs through a double-displacement mechanism. The nucleophile active site attacks the C1' of nucleotide 34 to detach the guanine base from the RNA, forming a covalent enzyme-RNA intermediate. The proton acceptor active site deprotonates the incoming PreQ1, allowing a nucleophilic attack on the C1' of the ribose to form the product. After dissociation, two additional enzymatic reactions on the tRNA convert PreQ1 to queuine (Q), resulting in the hypermodified nucleoside queuosine (7-(((4,5-cis-dihydroxy-2-cyclopenten-1-yl)amino)methyl)-7-deazaguanosine).</text>
</comment>
<comment type="catalytic activity">
    <reaction evidence="1">
        <text>7-aminomethyl-7-carbaguanine + guanosine(34) in tRNA = 7-aminomethyl-7-carbaguanosine(34) in tRNA + guanine</text>
        <dbReference type="Rhea" id="RHEA:24104"/>
        <dbReference type="Rhea" id="RHEA-COMP:10341"/>
        <dbReference type="Rhea" id="RHEA-COMP:10342"/>
        <dbReference type="ChEBI" id="CHEBI:16235"/>
        <dbReference type="ChEBI" id="CHEBI:58703"/>
        <dbReference type="ChEBI" id="CHEBI:74269"/>
        <dbReference type="ChEBI" id="CHEBI:82833"/>
        <dbReference type="EC" id="2.4.2.29"/>
    </reaction>
</comment>
<comment type="cofactor">
    <cofactor evidence="1">
        <name>Zn(2+)</name>
        <dbReference type="ChEBI" id="CHEBI:29105"/>
    </cofactor>
    <text evidence="1">Binds 1 zinc ion per subunit.</text>
</comment>
<comment type="pathway">
    <text evidence="1">tRNA modification; tRNA-queuosine biosynthesis.</text>
</comment>
<comment type="subunit">
    <text evidence="1">Homodimer. Within each dimer, one monomer is responsible for RNA recognition and catalysis, while the other monomer binds to the replacement base PreQ1.</text>
</comment>
<comment type="similarity">
    <text evidence="1">Belongs to the queuine tRNA-ribosyltransferase family.</text>
</comment>
<feature type="chain" id="PRO_0000135481" description="Queuine tRNA-ribosyltransferase">
    <location>
        <begin position="1"/>
        <end position="382"/>
    </location>
</feature>
<feature type="region of interest" description="RNA binding" evidence="1">
    <location>
        <begin position="249"/>
        <end position="255"/>
    </location>
</feature>
<feature type="region of interest" description="RNA binding; important for wobble base 34 recognition" evidence="1">
    <location>
        <begin position="273"/>
        <end position="277"/>
    </location>
</feature>
<feature type="active site" description="Proton acceptor" evidence="1">
    <location>
        <position position="93"/>
    </location>
</feature>
<feature type="active site" description="Nucleophile" evidence="1">
    <location>
        <position position="268"/>
    </location>
</feature>
<feature type="binding site" evidence="1">
    <location>
        <begin position="93"/>
        <end position="97"/>
    </location>
    <ligand>
        <name>substrate</name>
    </ligand>
</feature>
<feature type="binding site" evidence="1">
    <location>
        <position position="147"/>
    </location>
    <ligand>
        <name>substrate</name>
    </ligand>
</feature>
<feature type="binding site" evidence="1">
    <location>
        <position position="191"/>
    </location>
    <ligand>
        <name>substrate</name>
    </ligand>
</feature>
<feature type="binding site" evidence="1">
    <location>
        <position position="218"/>
    </location>
    <ligand>
        <name>substrate</name>
    </ligand>
</feature>
<feature type="binding site" evidence="1">
    <location>
        <position position="306"/>
    </location>
    <ligand>
        <name>Zn(2+)</name>
        <dbReference type="ChEBI" id="CHEBI:29105"/>
    </ligand>
</feature>
<feature type="binding site" evidence="1">
    <location>
        <position position="308"/>
    </location>
    <ligand>
        <name>Zn(2+)</name>
        <dbReference type="ChEBI" id="CHEBI:29105"/>
    </ligand>
</feature>
<feature type="binding site" evidence="1">
    <location>
        <position position="311"/>
    </location>
    <ligand>
        <name>Zn(2+)</name>
        <dbReference type="ChEBI" id="CHEBI:29105"/>
    </ligand>
</feature>
<feature type="binding site" evidence="1">
    <location>
        <position position="337"/>
    </location>
    <ligand>
        <name>Zn(2+)</name>
        <dbReference type="ChEBI" id="CHEBI:29105"/>
    </ligand>
</feature>
<organism>
    <name type="scientific">Haemophilus influenzae (strain ATCC 51907 / DSM 11121 / KW20 / Rd)</name>
    <dbReference type="NCBI Taxonomy" id="71421"/>
    <lineage>
        <taxon>Bacteria</taxon>
        <taxon>Pseudomonadati</taxon>
        <taxon>Pseudomonadota</taxon>
        <taxon>Gammaproteobacteria</taxon>
        <taxon>Pasteurellales</taxon>
        <taxon>Pasteurellaceae</taxon>
        <taxon>Haemophilus</taxon>
    </lineage>
</organism>
<name>TGT_HAEIN</name>